<protein>
    <recommendedName>
        <fullName>UPF0149 protein YgfB</fullName>
    </recommendedName>
</protein>
<reference key="1">
    <citation type="journal article" date="2002" name="Proc. Natl. Acad. Sci. U.S.A.">
        <title>Extensive mosaic structure revealed by the complete genome sequence of uropathogenic Escherichia coli.</title>
        <authorList>
            <person name="Welch R.A."/>
            <person name="Burland V."/>
            <person name="Plunkett G. III"/>
            <person name="Redford P."/>
            <person name="Roesch P."/>
            <person name="Rasko D."/>
            <person name="Buckles E.L."/>
            <person name="Liou S.-R."/>
            <person name="Boutin A."/>
            <person name="Hackett J."/>
            <person name="Stroud D."/>
            <person name="Mayhew G.F."/>
            <person name="Rose D.J."/>
            <person name="Zhou S."/>
            <person name="Schwartz D.C."/>
            <person name="Perna N.T."/>
            <person name="Mobley H.L.T."/>
            <person name="Donnenberg M.S."/>
            <person name="Blattner F.R."/>
        </authorList>
    </citation>
    <scope>NUCLEOTIDE SEQUENCE [LARGE SCALE GENOMIC DNA]</scope>
    <source>
        <strain>CFT073 / ATCC 700928 / UPEC</strain>
    </source>
</reference>
<name>YGFB_ECOL6</name>
<evidence type="ECO:0000305" key="1"/>
<keyword id="KW-1185">Reference proteome</keyword>
<feature type="chain" id="PRO_0000207559" description="UPF0149 protein YgfB">
    <location>
        <begin position="1"/>
        <end position="192"/>
    </location>
</feature>
<accession>P0A8C5</accession>
<accession>P25533</accession>
<accession>Q8XD28</accession>
<sequence length="192" mass="21230">MSIQNEMPGYNEMNQYLNQQGTGLTPAEMHGLISGMICGGNDDSSWLPLLHDLTNEGMAFGHELAQALRKMHSATSDALQDDGFLFQLYLPDGDDVSVFDRADALAGWVNHFLLGLGVTQPKLDKVTGETGEAIDDLRNIAQLGYDEDEDQEELEMSLEEIIEYVRVAALLCHDTFTHPQPTAPEVQKPTLH</sequence>
<gene>
    <name type="primary">ygfB</name>
    <name type="ordered locus">c3491</name>
</gene>
<proteinExistence type="inferred from homology"/>
<organism>
    <name type="scientific">Escherichia coli O6:H1 (strain CFT073 / ATCC 700928 / UPEC)</name>
    <dbReference type="NCBI Taxonomy" id="199310"/>
    <lineage>
        <taxon>Bacteria</taxon>
        <taxon>Pseudomonadati</taxon>
        <taxon>Pseudomonadota</taxon>
        <taxon>Gammaproteobacteria</taxon>
        <taxon>Enterobacterales</taxon>
        <taxon>Enterobacteriaceae</taxon>
        <taxon>Escherichia</taxon>
    </lineage>
</organism>
<comment type="similarity">
    <text evidence="1">Belongs to the UPF0149 family.</text>
</comment>
<comment type="sequence caution" evidence="1">
    <conflict type="erroneous initiation">
        <sequence resource="EMBL-CDS" id="AAN81939"/>
    </conflict>
</comment>
<dbReference type="EMBL" id="AE014075">
    <property type="protein sequence ID" value="AAN81939.1"/>
    <property type="status" value="ALT_INIT"/>
    <property type="molecule type" value="Genomic_DNA"/>
</dbReference>
<dbReference type="RefSeq" id="WP_001295378.1">
    <property type="nucleotide sequence ID" value="NZ_CP051263.1"/>
</dbReference>
<dbReference type="SMR" id="P0A8C5"/>
<dbReference type="STRING" id="199310.c3491"/>
<dbReference type="GeneID" id="93779092"/>
<dbReference type="KEGG" id="ecc:c3491"/>
<dbReference type="eggNOG" id="COG3079">
    <property type="taxonomic scope" value="Bacteria"/>
</dbReference>
<dbReference type="HOGENOM" id="CLU_085336_1_0_6"/>
<dbReference type="Proteomes" id="UP000001410">
    <property type="component" value="Chromosome"/>
</dbReference>
<dbReference type="GO" id="GO:0005829">
    <property type="term" value="C:cytosol"/>
    <property type="evidence" value="ECO:0007669"/>
    <property type="project" value="TreeGrafter"/>
</dbReference>
<dbReference type="FunFam" id="1.20.120.740:FF:000001">
    <property type="entry name" value="UPF0149 protein YgfB"/>
    <property type="match status" value="1"/>
</dbReference>
<dbReference type="Gene3D" id="1.20.120.740">
    <property type="entry name" value="YgfB uncharacterised protein family UPF0149, PF03695"/>
    <property type="match status" value="1"/>
</dbReference>
<dbReference type="HAMAP" id="MF_00346">
    <property type="entry name" value="UPF0149"/>
    <property type="match status" value="1"/>
</dbReference>
<dbReference type="InterPro" id="IPR011978">
    <property type="entry name" value="YgfB-like"/>
</dbReference>
<dbReference type="InterPro" id="IPR036255">
    <property type="entry name" value="YgfB-like_sf"/>
</dbReference>
<dbReference type="NCBIfam" id="NF002477">
    <property type="entry name" value="PRK01736.1"/>
    <property type="match status" value="1"/>
</dbReference>
<dbReference type="NCBIfam" id="TIGR02292">
    <property type="entry name" value="ygfB_yecA"/>
    <property type="match status" value="1"/>
</dbReference>
<dbReference type="PANTHER" id="PTHR37528">
    <property type="entry name" value="UPF0149 PROTEIN YGFB"/>
    <property type="match status" value="1"/>
</dbReference>
<dbReference type="PANTHER" id="PTHR37528:SF1">
    <property type="entry name" value="UPF0149 PROTEIN YGFB"/>
    <property type="match status" value="1"/>
</dbReference>
<dbReference type="Pfam" id="PF03695">
    <property type="entry name" value="UPF0149"/>
    <property type="match status" value="1"/>
</dbReference>
<dbReference type="SUPFAM" id="SSF101327">
    <property type="entry name" value="YgfB-like"/>
    <property type="match status" value="1"/>
</dbReference>